<name>CYB_OREMI</name>
<sequence>MTNIRKTHPLMKIVNGSFIDLPAPSNISSWWNFGSLLGICLILQILTGLFLAMHYTSDTMTAFSSVTHICRDVNYGWLIRYLHANGASMFFICLFIHVGRGLYYGSYMFMETWNIGVILLFAVMATAFMGYVLPWGQMSFWGATVITNLLSAIPYIGTDLVEWIWGGFSVDKATLTRFFAFHFILPFIIAALAGVHLLFLHETGSNNPSGLSSDTDKIPFHPYYTIKDILGALILILALSSLVLFSPDLLGDPDNYIPANPLNTPPHIKPEWYFLFAYAILRSIPNKLGGVLALVFSILILALMPFLHTSKQRSMMFRPISQCLFWLLVADLLTLTWIGGQPVEHPFVIIGQLASILYFTLILILMPLASLMENNLLKW</sequence>
<geneLocation type="mitochondrion"/>
<reference key="1">
    <citation type="journal article" date="2000" name="Genes Genet. Syst.">
        <title>Molecular phylogeny of East Asian moles inferred from the sequence variation of the mitochondrial cytochrome b gene.</title>
        <authorList>
            <person name="Tsuchiya K."/>
            <person name="Suzuki H."/>
            <person name="Shinohara A."/>
            <person name="Harada M."/>
            <person name="Wakana S."/>
            <person name="Sakaizumi M."/>
            <person name="Han S.H."/>
            <person name="Lin L.K."/>
            <person name="Kryukov A.P."/>
        </authorList>
    </citation>
    <scope>NUCLEOTIDE SEQUENCE [GENOMIC DNA]</scope>
    <source>
        <strain>Isolate KT3032HS624</strain>
    </source>
</reference>
<reference key="2">
    <citation type="journal article" date="2003" name="Mol. Phylogenet. Evol.">
        <title>Molecular phylogenetic relationships of moles, shrew moles, and desmans from the new and old worlds.</title>
        <authorList>
            <person name="Shinohara A."/>
            <person name="Campbell K.L."/>
            <person name="Suzuki H."/>
        </authorList>
    </citation>
    <scope>NUCLEOTIDE SEQUENCE [GENOMIC DNA]</scope>
    <source>
        <strain>Isolate SAS-3</strain>
    </source>
</reference>
<gene>
    <name type="primary">MT-CYB</name>
    <name type="synonym">COB</name>
    <name type="synonym">CYTB</name>
    <name type="synonym">MTCYB</name>
</gene>
<proteinExistence type="inferred from homology"/>
<keyword id="KW-0249">Electron transport</keyword>
<keyword id="KW-0349">Heme</keyword>
<keyword id="KW-0408">Iron</keyword>
<keyword id="KW-0472">Membrane</keyword>
<keyword id="KW-0479">Metal-binding</keyword>
<keyword id="KW-0496">Mitochondrion</keyword>
<keyword id="KW-0999">Mitochondrion inner membrane</keyword>
<keyword id="KW-0679">Respiratory chain</keyword>
<keyword id="KW-0812">Transmembrane</keyword>
<keyword id="KW-1133">Transmembrane helix</keyword>
<keyword id="KW-0813">Transport</keyword>
<keyword id="KW-0830">Ubiquinone</keyword>
<comment type="function">
    <text evidence="2">Component of the ubiquinol-cytochrome c reductase complex (complex III or cytochrome b-c1 complex) that is part of the mitochondrial respiratory chain. The b-c1 complex mediates electron transfer from ubiquinol to cytochrome c. Contributes to the generation of a proton gradient across the mitochondrial membrane that is then used for ATP synthesis.</text>
</comment>
<comment type="cofactor">
    <cofactor evidence="2">
        <name>heme b</name>
        <dbReference type="ChEBI" id="CHEBI:60344"/>
    </cofactor>
    <text evidence="2">Binds 2 heme b groups non-covalently.</text>
</comment>
<comment type="subunit">
    <text evidence="2">The cytochrome bc1 complex contains 11 subunits: 3 respiratory subunits (MT-CYB, CYC1 and UQCRFS1), 2 core proteins (UQCRC1 and UQCRC2) and 6 low-molecular weight proteins (UQCRH/QCR6, UQCRB/QCR7, UQCRQ/QCR8, UQCR10/QCR9, UQCR11/QCR10 and a cleavage product of UQCRFS1). This cytochrome bc1 complex then forms a dimer.</text>
</comment>
<comment type="subcellular location">
    <subcellularLocation>
        <location evidence="2">Mitochondrion inner membrane</location>
        <topology evidence="2">Multi-pass membrane protein</topology>
    </subcellularLocation>
</comment>
<comment type="miscellaneous">
    <text evidence="1">Heme 1 (or BL or b562) is low-potential and absorbs at about 562 nm, and heme 2 (or BH or b566) is high-potential and absorbs at about 566 nm.</text>
</comment>
<comment type="similarity">
    <text evidence="3 4">Belongs to the cytochrome b family.</text>
</comment>
<comment type="caution">
    <text evidence="2">The full-length protein contains only eight transmembrane helices, not nine as predicted by bioinformatics tools.</text>
</comment>
<feature type="chain" id="PRO_0000060966" description="Cytochrome b">
    <location>
        <begin position="1"/>
        <end position="379"/>
    </location>
</feature>
<feature type="transmembrane region" description="Helical" evidence="2">
    <location>
        <begin position="33"/>
        <end position="53"/>
    </location>
</feature>
<feature type="transmembrane region" description="Helical" evidence="2">
    <location>
        <begin position="77"/>
        <end position="98"/>
    </location>
</feature>
<feature type="transmembrane region" description="Helical" evidence="2">
    <location>
        <begin position="113"/>
        <end position="133"/>
    </location>
</feature>
<feature type="transmembrane region" description="Helical" evidence="2">
    <location>
        <begin position="178"/>
        <end position="198"/>
    </location>
</feature>
<feature type="transmembrane region" description="Helical" evidence="2">
    <location>
        <begin position="226"/>
        <end position="246"/>
    </location>
</feature>
<feature type="transmembrane region" description="Helical" evidence="2">
    <location>
        <begin position="288"/>
        <end position="308"/>
    </location>
</feature>
<feature type="transmembrane region" description="Helical" evidence="2">
    <location>
        <begin position="320"/>
        <end position="340"/>
    </location>
</feature>
<feature type="transmembrane region" description="Helical" evidence="2">
    <location>
        <begin position="347"/>
        <end position="367"/>
    </location>
</feature>
<feature type="binding site" description="axial binding residue" evidence="2">
    <location>
        <position position="83"/>
    </location>
    <ligand>
        <name>heme b</name>
        <dbReference type="ChEBI" id="CHEBI:60344"/>
        <label>b562</label>
    </ligand>
    <ligandPart>
        <name>Fe</name>
        <dbReference type="ChEBI" id="CHEBI:18248"/>
    </ligandPart>
</feature>
<feature type="binding site" description="axial binding residue" evidence="2">
    <location>
        <position position="97"/>
    </location>
    <ligand>
        <name>heme b</name>
        <dbReference type="ChEBI" id="CHEBI:60344"/>
        <label>b566</label>
    </ligand>
    <ligandPart>
        <name>Fe</name>
        <dbReference type="ChEBI" id="CHEBI:18248"/>
    </ligandPart>
</feature>
<feature type="binding site" description="axial binding residue" evidence="2">
    <location>
        <position position="182"/>
    </location>
    <ligand>
        <name>heme b</name>
        <dbReference type="ChEBI" id="CHEBI:60344"/>
        <label>b562</label>
    </ligand>
    <ligandPart>
        <name>Fe</name>
        <dbReference type="ChEBI" id="CHEBI:18248"/>
    </ligandPart>
</feature>
<feature type="binding site" description="axial binding residue" evidence="2">
    <location>
        <position position="196"/>
    </location>
    <ligand>
        <name>heme b</name>
        <dbReference type="ChEBI" id="CHEBI:60344"/>
        <label>b566</label>
    </ligand>
    <ligandPart>
        <name>Fe</name>
        <dbReference type="ChEBI" id="CHEBI:18248"/>
    </ligandPart>
</feature>
<feature type="binding site" evidence="2">
    <location>
        <position position="201"/>
    </location>
    <ligand>
        <name>a ubiquinone</name>
        <dbReference type="ChEBI" id="CHEBI:16389"/>
    </ligand>
</feature>
<feature type="sequence variant" description="In strain: Isolate SAS-3.">
    <original>G</original>
    <variation>S</variation>
    <location>
        <position position="16"/>
    </location>
</feature>
<feature type="sequence variant" description="In strain: Isolate SAS-3.">
    <original>I</original>
    <variation>V</variation>
    <location>
        <position position="156"/>
    </location>
</feature>
<accession>Q9MQY3</accession>
<accession>Q85DE7</accession>
<protein>
    <recommendedName>
        <fullName>Cytochrome b</fullName>
    </recommendedName>
    <alternativeName>
        <fullName>Complex III subunit 3</fullName>
    </alternativeName>
    <alternativeName>
        <fullName>Complex III subunit III</fullName>
    </alternativeName>
    <alternativeName>
        <fullName>Cytochrome b-c1 complex subunit 3</fullName>
    </alternativeName>
    <alternativeName>
        <fullName>Ubiquinol-cytochrome-c reductase complex cytochrome b subunit</fullName>
    </alternativeName>
</protein>
<dbReference type="EMBL" id="AB037604">
    <property type="protein sequence ID" value="BAA90563.1"/>
    <property type="molecule type" value="Genomic_DNA"/>
</dbReference>
<dbReference type="EMBL" id="AB076828">
    <property type="protein sequence ID" value="BAC75913.1"/>
    <property type="molecule type" value="Genomic_DNA"/>
</dbReference>
<dbReference type="SMR" id="Q9MQY3"/>
<dbReference type="GO" id="GO:0005743">
    <property type="term" value="C:mitochondrial inner membrane"/>
    <property type="evidence" value="ECO:0007669"/>
    <property type="project" value="UniProtKB-SubCell"/>
</dbReference>
<dbReference type="GO" id="GO:0045275">
    <property type="term" value="C:respiratory chain complex III"/>
    <property type="evidence" value="ECO:0007669"/>
    <property type="project" value="InterPro"/>
</dbReference>
<dbReference type="GO" id="GO:0046872">
    <property type="term" value="F:metal ion binding"/>
    <property type="evidence" value="ECO:0007669"/>
    <property type="project" value="UniProtKB-KW"/>
</dbReference>
<dbReference type="GO" id="GO:0008121">
    <property type="term" value="F:ubiquinol-cytochrome-c reductase activity"/>
    <property type="evidence" value="ECO:0007669"/>
    <property type="project" value="InterPro"/>
</dbReference>
<dbReference type="GO" id="GO:0006122">
    <property type="term" value="P:mitochondrial electron transport, ubiquinol to cytochrome c"/>
    <property type="evidence" value="ECO:0007669"/>
    <property type="project" value="TreeGrafter"/>
</dbReference>
<dbReference type="CDD" id="cd00290">
    <property type="entry name" value="cytochrome_b_C"/>
    <property type="match status" value="1"/>
</dbReference>
<dbReference type="CDD" id="cd00284">
    <property type="entry name" value="Cytochrome_b_N"/>
    <property type="match status" value="1"/>
</dbReference>
<dbReference type="FunFam" id="1.20.810.10:FF:000002">
    <property type="entry name" value="Cytochrome b"/>
    <property type="match status" value="1"/>
</dbReference>
<dbReference type="Gene3D" id="1.20.810.10">
    <property type="entry name" value="Cytochrome Bc1 Complex, Chain C"/>
    <property type="match status" value="1"/>
</dbReference>
<dbReference type="InterPro" id="IPR005798">
    <property type="entry name" value="Cyt_b/b6_C"/>
</dbReference>
<dbReference type="InterPro" id="IPR036150">
    <property type="entry name" value="Cyt_b/b6_C_sf"/>
</dbReference>
<dbReference type="InterPro" id="IPR005797">
    <property type="entry name" value="Cyt_b/b6_N"/>
</dbReference>
<dbReference type="InterPro" id="IPR027387">
    <property type="entry name" value="Cytb/b6-like_sf"/>
</dbReference>
<dbReference type="InterPro" id="IPR030689">
    <property type="entry name" value="Cytochrome_b"/>
</dbReference>
<dbReference type="InterPro" id="IPR048260">
    <property type="entry name" value="Cytochrome_b_C_euk/bac"/>
</dbReference>
<dbReference type="InterPro" id="IPR048259">
    <property type="entry name" value="Cytochrome_b_N_euk/bac"/>
</dbReference>
<dbReference type="InterPro" id="IPR016174">
    <property type="entry name" value="Di-haem_cyt_TM"/>
</dbReference>
<dbReference type="PANTHER" id="PTHR19271">
    <property type="entry name" value="CYTOCHROME B"/>
    <property type="match status" value="1"/>
</dbReference>
<dbReference type="PANTHER" id="PTHR19271:SF16">
    <property type="entry name" value="CYTOCHROME B"/>
    <property type="match status" value="1"/>
</dbReference>
<dbReference type="Pfam" id="PF00032">
    <property type="entry name" value="Cytochrom_B_C"/>
    <property type="match status" value="1"/>
</dbReference>
<dbReference type="Pfam" id="PF00033">
    <property type="entry name" value="Cytochrome_B"/>
    <property type="match status" value="1"/>
</dbReference>
<dbReference type="PIRSF" id="PIRSF038885">
    <property type="entry name" value="COB"/>
    <property type="match status" value="1"/>
</dbReference>
<dbReference type="SUPFAM" id="SSF81648">
    <property type="entry name" value="a domain/subunit of cytochrome bc1 complex (Ubiquinol-cytochrome c reductase)"/>
    <property type="match status" value="1"/>
</dbReference>
<dbReference type="SUPFAM" id="SSF81342">
    <property type="entry name" value="Transmembrane di-heme cytochromes"/>
    <property type="match status" value="1"/>
</dbReference>
<dbReference type="PROSITE" id="PS51003">
    <property type="entry name" value="CYTB_CTER"/>
    <property type="match status" value="1"/>
</dbReference>
<dbReference type="PROSITE" id="PS51002">
    <property type="entry name" value="CYTB_NTER"/>
    <property type="match status" value="1"/>
</dbReference>
<evidence type="ECO:0000250" key="1"/>
<evidence type="ECO:0000250" key="2">
    <source>
        <dbReference type="UniProtKB" id="P00157"/>
    </source>
</evidence>
<evidence type="ECO:0000255" key="3">
    <source>
        <dbReference type="PROSITE-ProRule" id="PRU00967"/>
    </source>
</evidence>
<evidence type="ECO:0000255" key="4">
    <source>
        <dbReference type="PROSITE-ProRule" id="PRU00968"/>
    </source>
</evidence>
<organism>
    <name type="scientific">Oreoscaptor mizura</name>
    <name type="common">Japanese mountain mole</name>
    <name type="synonym">Euroscaptor mizura</name>
    <dbReference type="NCBI Taxonomy" id="2835217"/>
    <lineage>
        <taxon>Eukaryota</taxon>
        <taxon>Metazoa</taxon>
        <taxon>Chordata</taxon>
        <taxon>Craniata</taxon>
        <taxon>Vertebrata</taxon>
        <taxon>Euteleostomi</taxon>
        <taxon>Mammalia</taxon>
        <taxon>Eutheria</taxon>
        <taxon>Laurasiatheria</taxon>
        <taxon>Eulipotyphla</taxon>
        <taxon>Talpidae</taxon>
        <taxon>Oreoscaptor</taxon>
    </lineage>
</organism>